<dbReference type="EC" id="3.1.26.11" evidence="1"/>
<dbReference type="EMBL" id="CP000712">
    <property type="protein sequence ID" value="ABQ77958.1"/>
    <property type="molecule type" value="Genomic_DNA"/>
</dbReference>
<dbReference type="SMR" id="A5W1E8"/>
<dbReference type="KEGG" id="ppf:Pput_1805"/>
<dbReference type="eggNOG" id="COG1234">
    <property type="taxonomic scope" value="Bacteria"/>
</dbReference>
<dbReference type="HOGENOM" id="CLU_031317_2_0_6"/>
<dbReference type="GO" id="GO:0042781">
    <property type="term" value="F:3'-tRNA processing endoribonuclease activity"/>
    <property type="evidence" value="ECO:0007669"/>
    <property type="project" value="UniProtKB-UniRule"/>
</dbReference>
<dbReference type="GO" id="GO:0008270">
    <property type="term" value="F:zinc ion binding"/>
    <property type="evidence" value="ECO:0007669"/>
    <property type="project" value="UniProtKB-UniRule"/>
</dbReference>
<dbReference type="CDD" id="cd07717">
    <property type="entry name" value="RNaseZ_ZiPD-like_MBL-fold"/>
    <property type="match status" value="1"/>
</dbReference>
<dbReference type="Gene3D" id="3.60.15.10">
    <property type="entry name" value="Ribonuclease Z/Hydroxyacylglutathione hydrolase-like"/>
    <property type="match status" value="1"/>
</dbReference>
<dbReference type="HAMAP" id="MF_01818">
    <property type="entry name" value="RNase_Z_BN"/>
    <property type="match status" value="1"/>
</dbReference>
<dbReference type="InterPro" id="IPR001279">
    <property type="entry name" value="Metallo-B-lactamas"/>
</dbReference>
<dbReference type="InterPro" id="IPR036866">
    <property type="entry name" value="RibonucZ/Hydroxyglut_hydro"/>
</dbReference>
<dbReference type="InterPro" id="IPR013471">
    <property type="entry name" value="RNase_Z/BN"/>
</dbReference>
<dbReference type="PANTHER" id="PTHR46018">
    <property type="entry name" value="ZINC PHOSPHODIESTERASE ELAC PROTEIN 1"/>
    <property type="match status" value="1"/>
</dbReference>
<dbReference type="PANTHER" id="PTHR46018:SF2">
    <property type="entry name" value="ZINC PHOSPHODIESTERASE ELAC PROTEIN 1"/>
    <property type="match status" value="1"/>
</dbReference>
<dbReference type="Pfam" id="PF00753">
    <property type="entry name" value="Lactamase_B"/>
    <property type="match status" value="1"/>
</dbReference>
<dbReference type="SUPFAM" id="SSF56281">
    <property type="entry name" value="Metallo-hydrolase/oxidoreductase"/>
    <property type="match status" value="1"/>
</dbReference>
<feature type="chain" id="PRO_1000070322" description="Ribonuclease Z">
    <location>
        <begin position="1"/>
        <end position="319"/>
    </location>
</feature>
<feature type="active site" description="Proton acceptor" evidence="1">
    <location>
        <position position="66"/>
    </location>
</feature>
<feature type="binding site" evidence="1">
    <location>
        <position position="62"/>
    </location>
    <ligand>
        <name>Zn(2+)</name>
        <dbReference type="ChEBI" id="CHEBI:29105"/>
        <label>1</label>
        <note>catalytic</note>
    </ligand>
</feature>
<feature type="binding site" evidence="1">
    <location>
        <position position="64"/>
    </location>
    <ligand>
        <name>Zn(2+)</name>
        <dbReference type="ChEBI" id="CHEBI:29105"/>
        <label>1</label>
        <note>catalytic</note>
    </ligand>
</feature>
<feature type="binding site" evidence="1">
    <location>
        <position position="66"/>
    </location>
    <ligand>
        <name>Zn(2+)</name>
        <dbReference type="ChEBI" id="CHEBI:29105"/>
        <label>2</label>
        <note>catalytic</note>
    </ligand>
</feature>
<feature type="binding site" evidence="1">
    <location>
        <position position="67"/>
    </location>
    <ligand>
        <name>Zn(2+)</name>
        <dbReference type="ChEBI" id="CHEBI:29105"/>
        <label>2</label>
        <note>catalytic</note>
    </ligand>
</feature>
<feature type="binding site" evidence="1">
    <location>
        <position position="139"/>
    </location>
    <ligand>
        <name>Zn(2+)</name>
        <dbReference type="ChEBI" id="CHEBI:29105"/>
        <label>1</label>
        <note>catalytic</note>
    </ligand>
</feature>
<feature type="binding site" evidence="1">
    <location>
        <position position="209"/>
    </location>
    <ligand>
        <name>Zn(2+)</name>
        <dbReference type="ChEBI" id="CHEBI:29105"/>
        <label>1</label>
        <note>catalytic</note>
    </ligand>
</feature>
<feature type="binding site" evidence="1">
    <location>
        <position position="209"/>
    </location>
    <ligand>
        <name>Zn(2+)</name>
        <dbReference type="ChEBI" id="CHEBI:29105"/>
        <label>2</label>
        <note>catalytic</note>
    </ligand>
</feature>
<feature type="binding site" evidence="1">
    <location>
        <position position="268"/>
    </location>
    <ligand>
        <name>Zn(2+)</name>
        <dbReference type="ChEBI" id="CHEBI:29105"/>
        <label>2</label>
        <note>catalytic</note>
    </ligand>
</feature>
<sequence>MDLLFLGTSAGVPTKARNVSATAVIEASGSHWYLVDCGEGTQHRLLHTPLSIRDLRAIFITHVHGDHCFGLPGLLASAGMSGRTQPLEVILPAVLHDWVRQGLVASDTFLPFELRLLPVEALIAWRSETLQVTTVQLSHRVPSVGFVFTEINPEPRLDIQRLDAEGIPRGPLWGELAKGLTVTFNGQLLNGNDYLRPSRPPQRVIVCGDNDKPALLAAVARGADVLVHEATFTQAVVERTGGTFGHSTAAEVARFAEAAGVRNLVLTHFSARYQNDPRRSPHIDTVRDEALAHYSGQLTLAQDLQRYHLGRNGLLEASA</sequence>
<organism>
    <name type="scientific">Pseudomonas putida (strain ATCC 700007 / DSM 6899 / JCM 31910 / BCRC 17059 / LMG 24140 / F1)</name>
    <dbReference type="NCBI Taxonomy" id="351746"/>
    <lineage>
        <taxon>Bacteria</taxon>
        <taxon>Pseudomonadati</taxon>
        <taxon>Pseudomonadota</taxon>
        <taxon>Gammaproteobacteria</taxon>
        <taxon>Pseudomonadales</taxon>
        <taxon>Pseudomonadaceae</taxon>
        <taxon>Pseudomonas</taxon>
    </lineage>
</organism>
<keyword id="KW-0255">Endonuclease</keyword>
<keyword id="KW-0378">Hydrolase</keyword>
<keyword id="KW-0479">Metal-binding</keyword>
<keyword id="KW-0540">Nuclease</keyword>
<keyword id="KW-0819">tRNA processing</keyword>
<keyword id="KW-0862">Zinc</keyword>
<gene>
    <name evidence="1" type="primary">rnz</name>
    <name type="ordered locus">Pput_1805</name>
</gene>
<evidence type="ECO:0000255" key="1">
    <source>
        <dbReference type="HAMAP-Rule" id="MF_01818"/>
    </source>
</evidence>
<comment type="function">
    <text evidence="1">Zinc phosphodiesterase, which displays some tRNA 3'-processing endonuclease activity. Probably involved in tRNA maturation, by removing a 3'-trailer from precursor tRNA.</text>
</comment>
<comment type="catalytic activity">
    <reaction evidence="1">
        <text>Endonucleolytic cleavage of RNA, removing extra 3' nucleotides from tRNA precursor, generating 3' termini of tRNAs. A 3'-hydroxy group is left at the tRNA terminus and a 5'-phosphoryl group is left at the trailer molecule.</text>
        <dbReference type="EC" id="3.1.26.11"/>
    </reaction>
</comment>
<comment type="cofactor">
    <cofactor evidence="1">
        <name>Zn(2+)</name>
        <dbReference type="ChEBI" id="CHEBI:29105"/>
    </cofactor>
    <text evidence="1">Binds 2 Zn(2+) ions.</text>
</comment>
<comment type="subunit">
    <text evidence="1">Homodimer.</text>
</comment>
<comment type="similarity">
    <text evidence="1">Belongs to the RNase Z family.</text>
</comment>
<protein>
    <recommendedName>
        <fullName evidence="1">Ribonuclease Z</fullName>
        <shortName evidence="1">RNase Z</shortName>
        <ecNumber evidence="1">3.1.26.11</ecNumber>
    </recommendedName>
    <alternativeName>
        <fullName evidence="1">tRNA 3 endonuclease</fullName>
    </alternativeName>
    <alternativeName>
        <fullName evidence="1">tRNase Z</fullName>
    </alternativeName>
</protein>
<accession>A5W1E8</accession>
<name>RNZ_PSEP1</name>
<proteinExistence type="inferred from homology"/>
<reference key="1">
    <citation type="submission" date="2007-05" db="EMBL/GenBank/DDBJ databases">
        <title>Complete sequence of Pseudomonas putida F1.</title>
        <authorList>
            <consortium name="US DOE Joint Genome Institute"/>
            <person name="Copeland A."/>
            <person name="Lucas S."/>
            <person name="Lapidus A."/>
            <person name="Barry K."/>
            <person name="Detter J.C."/>
            <person name="Glavina del Rio T."/>
            <person name="Hammon N."/>
            <person name="Israni S."/>
            <person name="Dalin E."/>
            <person name="Tice H."/>
            <person name="Pitluck S."/>
            <person name="Chain P."/>
            <person name="Malfatti S."/>
            <person name="Shin M."/>
            <person name="Vergez L."/>
            <person name="Schmutz J."/>
            <person name="Larimer F."/>
            <person name="Land M."/>
            <person name="Hauser L."/>
            <person name="Kyrpides N."/>
            <person name="Lykidis A."/>
            <person name="Parales R."/>
            <person name="Richardson P."/>
        </authorList>
    </citation>
    <scope>NUCLEOTIDE SEQUENCE [LARGE SCALE GENOMIC DNA]</scope>
    <source>
        <strain>ATCC 700007 / DSM 6899 / JCM 31910 / BCRC 17059 / LMG 24140 / F1</strain>
    </source>
</reference>